<organism>
    <name type="scientific">Clostridium kluyveri (strain NBRC 12016)</name>
    <dbReference type="NCBI Taxonomy" id="583346"/>
    <lineage>
        <taxon>Bacteria</taxon>
        <taxon>Bacillati</taxon>
        <taxon>Bacillota</taxon>
        <taxon>Clostridia</taxon>
        <taxon>Eubacteriales</taxon>
        <taxon>Clostridiaceae</taxon>
        <taxon>Clostridium</taxon>
    </lineage>
</organism>
<reference key="1">
    <citation type="submission" date="2005-09" db="EMBL/GenBank/DDBJ databases">
        <title>Complete genome sequence of Clostridium kluyveri and comparative genomics of Clostridia species.</title>
        <authorList>
            <person name="Inui M."/>
            <person name="Nonaka H."/>
            <person name="Shinoda Y."/>
            <person name="Ikenaga Y."/>
            <person name="Abe M."/>
            <person name="Naito K."/>
            <person name="Vertes A.A."/>
            <person name="Yukawa H."/>
        </authorList>
    </citation>
    <scope>NUCLEOTIDE SEQUENCE [LARGE SCALE GENOMIC DNA]</scope>
    <source>
        <strain>NBRC 12016</strain>
    </source>
</reference>
<dbReference type="EMBL" id="AP009049">
    <property type="protein sequence ID" value="BAH08305.1"/>
    <property type="molecule type" value="Genomic_DNA"/>
</dbReference>
<dbReference type="RefSeq" id="WP_012104007.1">
    <property type="nucleotide sequence ID" value="NC_011837.1"/>
</dbReference>
<dbReference type="SMR" id="B9DX62"/>
<dbReference type="KEGG" id="ckr:CKR_3254"/>
<dbReference type="HOGENOM" id="CLU_050669_0_1_9"/>
<dbReference type="Proteomes" id="UP000007969">
    <property type="component" value="Chromosome"/>
</dbReference>
<dbReference type="GO" id="GO:0005886">
    <property type="term" value="C:plasma membrane"/>
    <property type="evidence" value="ECO:0007669"/>
    <property type="project" value="UniProtKB-SubCell"/>
</dbReference>
<dbReference type="GO" id="GO:0045259">
    <property type="term" value="C:proton-transporting ATP synthase complex"/>
    <property type="evidence" value="ECO:0007669"/>
    <property type="project" value="UniProtKB-KW"/>
</dbReference>
<dbReference type="GO" id="GO:0005524">
    <property type="term" value="F:ATP binding"/>
    <property type="evidence" value="ECO:0007669"/>
    <property type="project" value="UniProtKB-UniRule"/>
</dbReference>
<dbReference type="GO" id="GO:0046933">
    <property type="term" value="F:proton-transporting ATP synthase activity, rotational mechanism"/>
    <property type="evidence" value="ECO:0007669"/>
    <property type="project" value="UniProtKB-UniRule"/>
</dbReference>
<dbReference type="GO" id="GO:0042777">
    <property type="term" value="P:proton motive force-driven plasma membrane ATP synthesis"/>
    <property type="evidence" value="ECO:0007669"/>
    <property type="project" value="UniProtKB-UniRule"/>
</dbReference>
<dbReference type="CDD" id="cd12151">
    <property type="entry name" value="F1-ATPase_gamma"/>
    <property type="match status" value="1"/>
</dbReference>
<dbReference type="Gene3D" id="3.40.1380.10">
    <property type="match status" value="1"/>
</dbReference>
<dbReference type="Gene3D" id="1.10.287.80">
    <property type="entry name" value="ATP synthase, gamma subunit, helix hairpin domain"/>
    <property type="match status" value="1"/>
</dbReference>
<dbReference type="HAMAP" id="MF_00815">
    <property type="entry name" value="ATP_synth_gamma_bact"/>
    <property type="match status" value="1"/>
</dbReference>
<dbReference type="InterPro" id="IPR035968">
    <property type="entry name" value="ATP_synth_F1_ATPase_gsu"/>
</dbReference>
<dbReference type="InterPro" id="IPR000131">
    <property type="entry name" value="ATP_synth_F1_gsu"/>
</dbReference>
<dbReference type="InterPro" id="IPR023632">
    <property type="entry name" value="ATP_synth_F1_gsu_CS"/>
</dbReference>
<dbReference type="NCBIfam" id="TIGR01146">
    <property type="entry name" value="ATPsyn_F1gamma"/>
    <property type="match status" value="1"/>
</dbReference>
<dbReference type="PANTHER" id="PTHR11693">
    <property type="entry name" value="ATP SYNTHASE GAMMA CHAIN"/>
    <property type="match status" value="1"/>
</dbReference>
<dbReference type="PANTHER" id="PTHR11693:SF22">
    <property type="entry name" value="ATP SYNTHASE SUBUNIT GAMMA, MITOCHONDRIAL"/>
    <property type="match status" value="1"/>
</dbReference>
<dbReference type="Pfam" id="PF00231">
    <property type="entry name" value="ATP-synt"/>
    <property type="match status" value="1"/>
</dbReference>
<dbReference type="PRINTS" id="PR00126">
    <property type="entry name" value="ATPASEGAMMA"/>
</dbReference>
<dbReference type="SUPFAM" id="SSF52943">
    <property type="entry name" value="ATP synthase (F1-ATPase), gamma subunit"/>
    <property type="match status" value="1"/>
</dbReference>
<dbReference type="PROSITE" id="PS00153">
    <property type="entry name" value="ATPASE_GAMMA"/>
    <property type="match status" value="1"/>
</dbReference>
<feature type="chain" id="PRO_1000148612" description="ATP synthase gamma chain">
    <location>
        <begin position="1"/>
        <end position="283"/>
    </location>
</feature>
<sequence>MAGAGLVTIKRRIKSITSTQKITKAMGLIATSKLRKVRKKLEANNKYCELFSSIVNELAMEAEQNNIYIKGNKSNKKLYIALNSDTGLCGGFNANVVNELNSIRSKEKEDFLLITMGQKGKMYFRRLNYNIESEYIDIPDVPTIKETEDVVYKALELYRNGEIGEINIVFTKFISTIKQNVIVEKLLPLEVKKVEKRNFIVKFEPSADEMIEDIVELHLRQKLLNCIINSKVSEQSSRMTAMDGATKNANDLLDELNLQYNRERQTAITQEITEIVGGAEALK</sequence>
<gene>
    <name evidence="1" type="primary">atpG</name>
    <name type="ordered locus">CKR_3254</name>
</gene>
<accession>B9DX62</accession>
<comment type="function">
    <text evidence="1">Produces ATP from ADP in the presence of a proton gradient across the membrane. The gamma chain is believed to be important in regulating ATPase activity and the flow of protons through the CF(0) complex.</text>
</comment>
<comment type="subunit">
    <text evidence="1">F-type ATPases have 2 components, CF(1) - the catalytic core - and CF(0) - the membrane proton channel. CF(1) has five subunits: alpha(3), beta(3), gamma(1), delta(1), epsilon(1). CF(0) has three main subunits: a, b and c.</text>
</comment>
<comment type="subcellular location">
    <subcellularLocation>
        <location evidence="1">Cell membrane</location>
        <topology evidence="1">Peripheral membrane protein</topology>
    </subcellularLocation>
</comment>
<comment type="similarity">
    <text evidence="1">Belongs to the ATPase gamma chain family.</text>
</comment>
<evidence type="ECO:0000255" key="1">
    <source>
        <dbReference type="HAMAP-Rule" id="MF_00815"/>
    </source>
</evidence>
<proteinExistence type="inferred from homology"/>
<protein>
    <recommendedName>
        <fullName evidence="1">ATP synthase gamma chain</fullName>
    </recommendedName>
    <alternativeName>
        <fullName evidence="1">ATP synthase F1 sector gamma subunit</fullName>
    </alternativeName>
    <alternativeName>
        <fullName evidence="1">F-ATPase gamma subunit</fullName>
    </alternativeName>
</protein>
<keyword id="KW-0066">ATP synthesis</keyword>
<keyword id="KW-1003">Cell membrane</keyword>
<keyword id="KW-0139">CF(1)</keyword>
<keyword id="KW-0375">Hydrogen ion transport</keyword>
<keyword id="KW-0406">Ion transport</keyword>
<keyword id="KW-0472">Membrane</keyword>
<keyword id="KW-0813">Transport</keyword>
<name>ATPG_CLOK1</name>